<sequence>MARPKIPRRIECHPPASCFKPNGVPIRQLARVELAPDELEALRLVDQLGLQQQQAALQMQVSRQTLANLVKAARFKVVDCLLHQKALYIQAIDNKSSD</sequence>
<organism>
    <name type="scientific">Vibrio cholerae serotype O1 (strain ATCC 39315 / El Tor Inaba N16961)</name>
    <dbReference type="NCBI Taxonomy" id="243277"/>
    <lineage>
        <taxon>Bacteria</taxon>
        <taxon>Pseudomonadati</taxon>
        <taxon>Pseudomonadota</taxon>
        <taxon>Gammaproteobacteria</taxon>
        <taxon>Vibrionales</taxon>
        <taxon>Vibrionaceae</taxon>
        <taxon>Vibrio</taxon>
    </lineage>
</organism>
<reference key="1">
    <citation type="journal article" date="2000" name="Nature">
        <title>DNA sequence of both chromosomes of the cholera pathogen Vibrio cholerae.</title>
        <authorList>
            <person name="Heidelberg J.F."/>
            <person name="Eisen J.A."/>
            <person name="Nelson W.C."/>
            <person name="Clayton R.A."/>
            <person name="Gwinn M.L."/>
            <person name="Dodson R.J."/>
            <person name="Haft D.H."/>
            <person name="Hickey E.K."/>
            <person name="Peterson J.D."/>
            <person name="Umayam L.A."/>
            <person name="Gill S.R."/>
            <person name="Nelson K.E."/>
            <person name="Read T.D."/>
            <person name="Tettelin H."/>
            <person name="Richardson D.L."/>
            <person name="Ermolaeva M.D."/>
            <person name="Vamathevan J.J."/>
            <person name="Bass S."/>
            <person name="Qin H."/>
            <person name="Dragoi I."/>
            <person name="Sellers P."/>
            <person name="McDonald L.A."/>
            <person name="Utterback T.R."/>
            <person name="Fleischmann R.D."/>
            <person name="Nierman W.C."/>
            <person name="White O."/>
            <person name="Salzberg S.L."/>
            <person name="Smith H.O."/>
            <person name="Colwell R.R."/>
            <person name="Mekalanos J.J."/>
            <person name="Venter J.C."/>
            <person name="Fraser C.M."/>
        </authorList>
    </citation>
    <scope>NUCLEOTIDE SEQUENCE [LARGE SCALE GENOMIC DNA]</scope>
    <source>
        <strain>ATCC 39315 / El Tor Inaba N16961</strain>
    </source>
</reference>
<protein>
    <recommendedName>
        <fullName>UPF0251 protein VC_A0091</fullName>
    </recommendedName>
</protein>
<evidence type="ECO:0000305" key="1"/>
<comment type="similarity">
    <text evidence="1">Belongs to the UPF0251 family.</text>
</comment>
<gene>
    <name type="ordered locus">VC_A0091</name>
</gene>
<accession>Q9KN74</accession>
<feature type="chain" id="PRO_0000147592" description="UPF0251 protein VC_A0091">
    <location>
        <begin position="1"/>
        <end position="98"/>
    </location>
</feature>
<name>Y2891_VIBCH</name>
<keyword id="KW-1185">Reference proteome</keyword>
<proteinExistence type="inferred from homology"/>
<dbReference type="EMBL" id="AE003853">
    <property type="protein sequence ID" value="AAF96005.1"/>
    <property type="molecule type" value="Genomic_DNA"/>
</dbReference>
<dbReference type="PIR" id="A82501">
    <property type="entry name" value="A82501"/>
</dbReference>
<dbReference type="RefSeq" id="NP_232492.1">
    <property type="nucleotide sequence ID" value="NC_002506.1"/>
</dbReference>
<dbReference type="RefSeq" id="WP_000113593.1">
    <property type="nucleotide sequence ID" value="NZ_LT906615.1"/>
</dbReference>
<dbReference type="SMR" id="Q9KN74"/>
<dbReference type="STRING" id="243277.VC_A0091"/>
<dbReference type="DNASU" id="2611991"/>
<dbReference type="EnsemblBacteria" id="AAF96005">
    <property type="protein sequence ID" value="AAF96005"/>
    <property type="gene ID" value="VC_A0091"/>
</dbReference>
<dbReference type="KEGG" id="vch:VC_A0091"/>
<dbReference type="PATRIC" id="fig|243277.26.peg.2732"/>
<dbReference type="eggNOG" id="COG1342">
    <property type="taxonomic scope" value="Bacteria"/>
</dbReference>
<dbReference type="HOGENOM" id="CLU_094511_2_1_6"/>
<dbReference type="Proteomes" id="UP000000584">
    <property type="component" value="Chromosome 2"/>
</dbReference>
<dbReference type="HAMAP" id="MF_00674">
    <property type="entry name" value="UPF0251"/>
    <property type="match status" value="1"/>
</dbReference>
<dbReference type="InterPro" id="IPR002852">
    <property type="entry name" value="UPF0251"/>
</dbReference>
<dbReference type="PANTHER" id="PTHR37478">
    <property type="match status" value="1"/>
</dbReference>
<dbReference type="PANTHER" id="PTHR37478:SF2">
    <property type="entry name" value="UPF0251 PROTEIN TK0562"/>
    <property type="match status" value="1"/>
</dbReference>
<dbReference type="Pfam" id="PF02001">
    <property type="entry name" value="DUF134"/>
    <property type="match status" value="1"/>
</dbReference>